<organism>
    <name type="scientific">Chlamydia trachomatis serovar L2b (strain UCH-1/proctitis)</name>
    <dbReference type="NCBI Taxonomy" id="471473"/>
    <lineage>
        <taxon>Bacteria</taxon>
        <taxon>Pseudomonadati</taxon>
        <taxon>Chlamydiota</taxon>
        <taxon>Chlamydiia</taxon>
        <taxon>Chlamydiales</taxon>
        <taxon>Chlamydiaceae</taxon>
        <taxon>Chlamydia/Chlamydophila group</taxon>
        <taxon>Chlamydia</taxon>
    </lineage>
</organism>
<gene>
    <name evidence="1" type="primary">hrcA</name>
    <name type="ordered locus">CTLon_0647</name>
</gene>
<comment type="function">
    <text evidence="1">Negative regulator of class I heat shock genes (grpE-dnaK-dnaJ and groELS operons). Prevents heat-shock induction of these operons.</text>
</comment>
<comment type="similarity">
    <text evidence="1">Belongs to the HrcA family.</text>
</comment>
<proteinExistence type="inferred from homology"/>
<evidence type="ECO:0000255" key="1">
    <source>
        <dbReference type="HAMAP-Rule" id="MF_00081"/>
    </source>
</evidence>
<name>HRCA_CHLTB</name>
<feature type="chain" id="PRO_1000092805" description="Heat-inducible transcription repressor HrcA">
    <location>
        <begin position="1"/>
        <end position="392"/>
    </location>
</feature>
<protein>
    <recommendedName>
        <fullName evidence="1">Heat-inducible transcription repressor HrcA</fullName>
    </recommendedName>
</protein>
<reference key="1">
    <citation type="journal article" date="2008" name="Genome Res.">
        <title>Chlamydia trachomatis: genome sequence analysis of lymphogranuloma venereum isolates.</title>
        <authorList>
            <person name="Thomson N.R."/>
            <person name="Holden M.T.G."/>
            <person name="Carder C."/>
            <person name="Lennard N."/>
            <person name="Lockey S.J."/>
            <person name="Marsh P."/>
            <person name="Skipp P."/>
            <person name="O'Connor C.D."/>
            <person name="Goodhead I."/>
            <person name="Norbertzcak H."/>
            <person name="Harris B."/>
            <person name="Ormond D."/>
            <person name="Rance R."/>
            <person name="Quail M.A."/>
            <person name="Parkhill J."/>
            <person name="Stephens R.S."/>
            <person name="Clarke I.N."/>
        </authorList>
    </citation>
    <scope>NUCLEOTIDE SEQUENCE [LARGE SCALE GENOMIC DNA]</scope>
    <source>
        <strain>UCH-1/proctitis</strain>
    </source>
</reference>
<dbReference type="EMBL" id="AM884177">
    <property type="protein sequence ID" value="CAP07044.1"/>
    <property type="molecule type" value="Genomic_DNA"/>
</dbReference>
<dbReference type="RefSeq" id="WP_012263647.1">
    <property type="nucleotide sequence ID" value="NC_010280.2"/>
</dbReference>
<dbReference type="SMR" id="B0BC29"/>
<dbReference type="KEGG" id="ctl:CTLon_0647"/>
<dbReference type="HOGENOM" id="CLU_050019_1_0_0"/>
<dbReference type="Proteomes" id="UP001154401">
    <property type="component" value="Chromosome"/>
</dbReference>
<dbReference type="GO" id="GO:0003677">
    <property type="term" value="F:DNA binding"/>
    <property type="evidence" value="ECO:0007669"/>
    <property type="project" value="InterPro"/>
</dbReference>
<dbReference type="GO" id="GO:0045892">
    <property type="term" value="P:negative regulation of DNA-templated transcription"/>
    <property type="evidence" value="ECO:0007669"/>
    <property type="project" value="UniProtKB-UniRule"/>
</dbReference>
<dbReference type="FunFam" id="1.10.10.10:FF:000785">
    <property type="entry name" value="Heat-inducible transcription repressor HrcA"/>
    <property type="match status" value="1"/>
</dbReference>
<dbReference type="FunFam" id="3.30.450.40:FF:000154">
    <property type="entry name" value="Heat-inducible transcription repressor HrcA"/>
    <property type="match status" value="1"/>
</dbReference>
<dbReference type="Gene3D" id="3.30.450.40">
    <property type="match status" value="1"/>
</dbReference>
<dbReference type="Gene3D" id="1.10.10.10">
    <property type="entry name" value="Winged helix-like DNA-binding domain superfamily/Winged helix DNA-binding domain"/>
    <property type="match status" value="1"/>
</dbReference>
<dbReference type="HAMAP" id="MF_00081">
    <property type="entry name" value="HrcA"/>
    <property type="match status" value="1"/>
</dbReference>
<dbReference type="InterPro" id="IPR029016">
    <property type="entry name" value="GAF-like_dom_sf"/>
</dbReference>
<dbReference type="InterPro" id="IPR002571">
    <property type="entry name" value="HrcA"/>
</dbReference>
<dbReference type="InterPro" id="IPR021153">
    <property type="entry name" value="HrcA_C"/>
</dbReference>
<dbReference type="InterPro" id="IPR036388">
    <property type="entry name" value="WH-like_DNA-bd_sf"/>
</dbReference>
<dbReference type="InterPro" id="IPR036390">
    <property type="entry name" value="WH_DNA-bd_sf"/>
</dbReference>
<dbReference type="NCBIfam" id="TIGR00331">
    <property type="entry name" value="hrcA"/>
    <property type="match status" value="1"/>
</dbReference>
<dbReference type="PANTHER" id="PTHR34824">
    <property type="entry name" value="HEAT-INDUCIBLE TRANSCRIPTION REPRESSOR HRCA"/>
    <property type="match status" value="1"/>
</dbReference>
<dbReference type="PANTHER" id="PTHR34824:SF1">
    <property type="entry name" value="HEAT-INDUCIBLE TRANSCRIPTION REPRESSOR HRCA"/>
    <property type="match status" value="1"/>
</dbReference>
<dbReference type="Pfam" id="PF01628">
    <property type="entry name" value="HrcA"/>
    <property type="match status" value="1"/>
</dbReference>
<dbReference type="PIRSF" id="PIRSF005485">
    <property type="entry name" value="HrcA"/>
    <property type="match status" value="1"/>
</dbReference>
<dbReference type="SUPFAM" id="SSF55781">
    <property type="entry name" value="GAF domain-like"/>
    <property type="match status" value="1"/>
</dbReference>
<dbReference type="SUPFAM" id="SSF46785">
    <property type="entry name" value="Winged helix' DNA-binding domain"/>
    <property type="match status" value="1"/>
</dbReference>
<sequence>MENRIEMSQLRASKKDSKISYVLLMATKLYLESGQPVGSKLLEETYCSDLSSATIRNYFAQLETNGFLRKNHISGGRIPTDLAFRYYADHNAPFLEQEEILAIQQKLTELPEYSKNIVKDLQKASEVLSDILQLPVCFSSPRFESDSVINIQLVAIDDQRVVFVLSTEFGQVFTDVLWLPEQLPENSLKRIEGFLQNYLRKQPSDSLLSQKEEDLGMVLYNEVVVRYLTRYCHFSEEDLYQTGLSRLLKYETFKDPETLAQGLAFFENRKHMCQLLNTYLHKETPTAFIGRELTDIVGNTDPSCAVITIPYYMDRTPLGAFGVLGPMNLPYQQVFGTLSLFTERLKVILTQSFYKFKLSFRRPCPTDPRCSQRPAELTRSSSIKLLPAKELS</sequence>
<keyword id="KW-0678">Repressor</keyword>
<keyword id="KW-0346">Stress response</keyword>
<keyword id="KW-0804">Transcription</keyword>
<keyword id="KW-0805">Transcription regulation</keyword>
<accession>B0BC29</accession>